<gene>
    <name type="ordered locus">At3g13150</name>
    <name type="ORF">MJG19.10</name>
</gene>
<protein>
    <recommendedName>
        <fullName>Pentatricopeptide repeat-containing protein At3g13150</fullName>
    </recommendedName>
</protein>
<evidence type="ECO:0000256" key="1">
    <source>
        <dbReference type="SAM" id="MobiDB-lite"/>
    </source>
</evidence>
<evidence type="ECO:0000305" key="2"/>
<proteinExistence type="evidence at transcript level"/>
<sequence>MSKVGSSLYSRLHGIFKESSIATAKSAKPRSQTKSTKFPSKLKASTASVGDGGQSSNDAKDSKNSKLTQKVEKFKRSCESESFRQVHGLYSAFIRRLREAKKFSTIDEVLQYQKKFDDIKSEDFVIRIMLLYGYSGMAEHAHKLFDEMPELNCERTVKSFNALLSAYVNSKKLDEAMKTFKELPEKLGITPDLVTYNTMIKALCRKGSMDDILSIFEELEKNGFEPDLISFNTLLEEFYRRELFVEGDRIWDLMKSKNLSPNIRSYNSRVRGLTRNKKFTDALNLIDVMKTEGISPDVHTYNALITAYRVDNNLEEVMKCYNEMKEKGLTPDTVTYCMLIPLLCKKGDLDRAVEVSEEAIKHKLLSRPNMYKPVVERLMGAGKIDEATQLVKNGKLQSYFRYLPDLSAGKKKTTSSPVSSSAKTTSTPVSSSPDTSSFLLSLSLAADSSSSDSDSSSPDSSSSVSSSPDSSSSVSSSPDSYSSFSSSPDSSSSVSSSLFSSSRENSSSPDYSNSVSSSLDYSGSVSSSSDYSSSVFPSANSSSSSSGLLDD</sequence>
<reference key="1">
    <citation type="journal article" date="2000" name="DNA Res.">
        <title>Structural analysis of Arabidopsis thaliana chromosome 3. II. Sequence features of the 4,251,695 bp regions covered by 90 P1, TAC and BAC clones.</title>
        <authorList>
            <person name="Kaneko T."/>
            <person name="Katoh T."/>
            <person name="Sato S."/>
            <person name="Nakamura Y."/>
            <person name="Asamizu E."/>
            <person name="Tabata S."/>
        </authorList>
    </citation>
    <scope>NUCLEOTIDE SEQUENCE [LARGE SCALE GENOMIC DNA]</scope>
    <source>
        <strain>cv. Columbia</strain>
    </source>
</reference>
<reference key="2">
    <citation type="journal article" date="2017" name="Plant J.">
        <title>Araport11: a complete reannotation of the Arabidopsis thaliana reference genome.</title>
        <authorList>
            <person name="Cheng C.Y."/>
            <person name="Krishnakumar V."/>
            <person name="Chan A.P."/>
            <person name="Thibaud-Nissen F."/>
            <person name="Schobel S."/>
            <person name="Town C.D."/>
        </authorList>
    </citation>
    <scope>GENOME REANNOTATION</scope>
    <source>
        <strain>cv. Columbia</strain>
    </source>
</reference>
<reference key="3">
    <citation type="submission" date="2005-05" db="EMBL/GenBank/DDBJ databases">
        <title>Arabidopsis ORF clones.</title>
        <authorList>
            <person name="Cheuk R.F."/>
            <person name="Chen H."/>
            <person name="Kim C.J."/>
            <person name="Shinn P."/>
            <person name="Ecker J.R."/>
        </authorList>
    </citation>
    <scope>NUCLEOTIDE SEQUENCE [LARGE SCALE MRNA]</scope>
    <source>
        <strain>cv. Columbia</strain>
    </source>
</reference>
<reference key="4">
    <citation type="journal article" date="2004" name="Plant Cell">
        <title>Genome-wide analysis of Arabidopsis pentatricopeptide repeat proteins reveals their essential role in organelle biogenesis.</title>
        <authorList>
            <person name="Lurin C."/>
            <person name="Andres C."/>
            <person name="Aubourg S."/>
            <person name="Bellaoui M."/>
            <person name="Bitton F."/>
            <person name="Bruyere C."/>
            <person name="Caboche M."/>
            <person name="Debast C."/>
            <person name="Gualberto J."/>
            <person name="Hoffmann B."/>
            <person name="Lecharny A."/>
            <person name="Le Ret M."/>
            <person name="Martin-Magniette M.-L."/>
            <person name="Mireau H."/>
            <person name="Peeters N."/>
            <person name="Renou J.-P."/>
            <person name="Szurek B."/>
            <person name="Taconnat L."/>
            <person name="Small I."/>
        </authorList>
    </citation>
    <scope>GENE FAMILY</scope>
</reference>
<keyword id="KW-1185">Reference proteome</keyword>
<keyword id="KW-0677">Repeat</keyword>
<name>PP225_ARATH</name>
<feature type="chain" id="PRO_0000356084" description="Pentatricopeptide repeat-containing protein At3g13150">
    <location>
        <begin position="1"/>
        <end position="551"/>
    </location>
</feature>
<feature type="repeat" description="PPR 1">
    <location>
        <begin position="121"/>
        <end position="155"/>
    </location>
</feature>
<feature type="repeat" description="PPR 2">
    <location>
        <begin position="156"/>
        <end position="191"/>
    </location>
</feature>
<feature type="repeat" description="PPR 3">
    <location>
        <begin position="192"/>
        <end position="226"/>
    </location>
</feature>
<feature type="repeat" description="PPR 4">
    <location>
        <begin position="227"/>
        <end position="261"/>
    </location>
</feature>
<feature type="repeat" description="PPR 5">
    <location>
        <begin position="262"/>
        <end position="296"/>
    </location>
</feature>
<feature type="repeat" description="PPR 6">
    <location>
        <begin position="297"/>
        <end position="331"/>
    </location>
</feature>
<feature type="repeat" description="PPR 7">
    <location>
        <begin position="332"/>
        <end position="366"/>
    </location>
</feature>
<feature type="region of interest" description="Disordered" evidence="1">
    <location>
        <begin position="22"/>
        <end position="67"/>
    </location>
</feature>
<feature type="region of interest" description="Disordered" evidence="1">
    <location>
        <begin position="409"/>
        <end position="435"/>
    </location>
</feature>
<feature type="region of interest" description="Disordered" evidence="1">
    <location>
        <begin position="449"/>
        <end position="551"/>
    </location>
</feature>
<feature type="compositionally biased region" description="Polar residues" evidence="1">
    <location>
        <begin position="29"/>
        <end position="48"/>
    </location>
</feature>
<feature type="compositionally biased region" description="Basic and acidic residues" evidence="1">
    <location>
        <begin position="58"/>
        <end position="67"/>
    </location>
</feature>
<feature type="compositionally biased region" description="Low complexity" evidence="1">
    <location>
        <begin position="415"/>
        <end position="435"/>
    </location>
</feature>
<dbReference type="EMBL" id="AP000375">
    <property type="protein sequence ID" value="BAB01406.1"/>
    <property type="molecule type" value="Genomic_DNA"/>
</dbReference>
<dbReference type="EMBL" id="CP002686">
    <property type="protein sequence ID" value="AEE75302.1"/>
    <property type="molecule type" value="Genomic_DNA"/>
</dbReference>
<dbReference type="EMBL" id="BT023440">
    <property type="protein sequence ID" value="AAY56431.1"/>
    <property type="molecule type" value="mRNA"/>
</dbReference>
<dbReference type="RefSeq" id="NP_187922.1">
    <property type="nucleotide sequence ID" value="NM_112154.4"/>
</dbReference>
<dbReference type="SMR" id="Q9LK58"/>
<dbReference type="FunCoup" id="Q9LK58">
    <property type="interactions" value="72"/>
</dbReference>
<dbReference type="STRING" id="3702.Q9LK58"/>
<dbReference type="PaxDb" id="3702-AT3G13150.1"/>
<dbReference type="ProteomicsDB" id="249174"/>
<dbReference type="EnsemblPlants" id="AT3G13150.1">
    <property type="protein sequence ID" value="AT3G13150.1"/>
    <property type="gene ID" value="AT3G13150"/>
</dbReference>
<dbReference type="GeneID" id="820503"/>
<dbReference type="Gramene" id="AT3G13150.1">
    <property type="protein sequence ID" value="AT3G13150.1"/>
    <property type="gene ID" value="AT3G13150"/>
</dbReference>
<dbReference type="KEGG" id="ath:AT3G13150"/>
<dbReference type="Araport" id="AT3G13150"/>
<dbReference type="TAIR" id="AT3G13150"/>
<dbReference type="eggNOG" id="KOG4197">
    <property type="taxonomic scope" value="Eukaryota"/>
</dbReference>
<dbReference type="HOGENOM" id="CLU_002706_10_3_1"/>
<dbReference type="InParanoid" id="Q9LK58"/>
<dbReference type="OMA" id="IRIMLLY"/>
<dbReference type="PhylomeDB" id="Q9LK58"/>
<dbReference type="PRO" id="PR:Q9LK58"/>
<dbReference type="Proteomes" id="UP000006548">
    <property type="component" value="Chromosome 3"/>
</dbReference>
<dbReference type="ExpressionAtlas" id="Q9LK58">
    <property type="expression patterns" value="baseline and differential"/>
</dbReference>
<dbReference type="GO" id="GO:0003729">
    <property type="term" value="F:mRNA binding"/>
    <property type="evidence" value="ECO:0000314"/>
    <property type="project" value="TAIR"/>
</dbReference>
<dbReference type="Gene3D" id="1.25.40.10">
    <property type="entry name" value="Tetratricopeptide repeat domain"/>
    <property type="match status" value="2"/>
</dbReference>
<dbReference type="InterPro" id="IPR002885">
    <property type="entry name" value="Pentatricopeptide_rpt"/>
</dbReference>
<dbReference type="InterPro" id="IPR050667">
    <property type="entry name" value="PPR-containing_protein"/>
</dbReference>
<dbReference type="InterPro" id="IPR011990">
    <property type="entry name" value="TPR-like_helical_dom_sf"/>
</dbReference>
<dbReference type="NCBIfam" id="TIGR00756">
    <property type="entry name" value="PPR"/>
    <property type="match status" value="5"/>
</dbReference>
<dbReference type="PANTHER" id="PTHR47939">
    <property type="entry name" value="MEMBRANE-ASSOCIATED SALT-INDUCIBLE PROTEIN-LIKE"/>
    <property type="match status" value="1"/>
</dbReference>
<dbReference type="PANTHER" id="PTHR47939:SF8">
    <property type="entry name" value="PENTACOTRIPEPTIDE-REPEAT REGION OF PRORP DOMAIN-CONTAINING PROTEIN"/>
    <property type="match status" value="1"/>
</dbReference>
<dbReference type="Pfam" id="PF01535">
    <property type="entry name" value="PPR"/>
    <property type="match status" value="3"/>
</dbReference>
<dbReference type="Pfam" id="PF13041">
    <property type="entry name" value="PPR_2"/>
    <property type="match status" value="2"/>
</dbReference>
<dbReference type="PROSITE" id="PS51375">
    <property type="entry name" value="PPR"/>
    <property type="match status" value="7"/>
</dbReference>
<comment type="similarity">
    <text evidence="2">Belongs to the PPR family. P subfamily.</text>
</comment>
<comment type="online information" name="Pentatricopeptide repeat proteins">
    <link uri="https://ppr.plantenergy.uwa.edu.au"/>
</comment>
<accession>Q9LK58</accession>
<organism>
    <name type="scientific">Arabidopsis thaliana</name>
    <name type="common">Mouse-ear cress</name>
    <dbReference type="NCBI Taxonomy" id="3702"/>
    <lineage>
        <taxon>Eukaryota</taxon>
        <taxon>Viridiplantae</taxon>
        <taxon>Streptophyta</taxon>
        <taxon>Embryophyta</taxon>
        <taxon>Tracheophyta</taxon>
        <taxon>Spermatophyta</taxon>
        <taxon>Magnoliopsida</taxon>
        <taxon>eudicotyledons</taxon>
        <taxon>Gunneridae</taxon>
        <taxon>Pentapetalae</taxon>
        <taxon>rosids</taxon>
        <taxon>malvids</taxon>
        <taxon>Brassicales</taxon>
        <taxon>Brassicaceae</taxon>
        <taxon>Camelineae</taxon>
        <taxon>Arabidopsis</taxon>
    </lineage>
</organism>